<evidence type="ECO:0000250" key="1"/>
<evidence type="ECO:0000255" key="2"/>
<evidence type="ECO:0000255" key="3">
    <source>
        <dbReference type="PROSITE-ProRule" id="PRU00107"/>
    </source>
</evidence>
<evidence type="ECO:0000255" key="4">
    <source>
        <dbReference type="PROSITE-ProRule" id="PRU00169"/>
    </source>
</evidence>
<evidence type="ECO:0000305" key="5"/>
<comment type="function">
    <text evidence="1">May act early in the ethylene signal transduction pathway, possibly as an ethylene receptor, or as a regulator of the pathway.</text>
</comment>
<comment type="catalytic activity">
    <reaction>
        <text>ATP + protein L-histidine = ADP + protein N-phospho-L-histidine.</text>
        <dbReference type="EC" id="2.7.13.3"/>
    </reaction>
</comment>
<comment type="cofactor">
    <cofactor evidence="1">
        <name>Cu cation</name>
        <dbReference type="ChEBI" id="CHEBI:23378"/>
    </cofactor>
    <text evidence="1">Binds 1 copper ion per dimer.</text>
</comment>
<comment type="subunit">
    <text evidence="1">Homodimer; disulfide-linked.</text>
</comment>
<comment type="subcellular location">
    <subcellularLocation>
        <location evidence="1">Endoplasmic reticulum membrane</location>
        <topology evidence="1">Multi-pass membrane protein</topology>
    </subcellularLocation>
</comment>
<comment type="tissue specificity">
    <text>In seeds and placenta.</text>
</comment>
<comment type="developmental stage">
    <text>Early development of fruit and ripening.</text>
</comment>
<comment type="PTM">
    <text evidence="1">Activation probably requires a transfer of a phosphate group between a His in the transmitter domain and an Asp of the receiver domain.</text>
</comment>
<comment type="similarity">
    <text evidence="5">Belongs to the ethylene receptor family.</text>
</comment>
<organism>
    <name type="scientific">Cucumis melo var. cantalupensis</name>
    <name type="common">Netted muskmelon</name>
    <name type="synonym">Cucumis melo var. reticulatus</name>
    <dbReference type="NCBI Taxonomy" id="3658"/>
    <lineage>
        <taxon>Eukaryota</taxon>
        <taxon>Viridiplantae</taxon>
        <taxon>Streptophyta</taxon>
        <taxon>Embryophyta</taxon>
        <taxon>Tracheophyta</taxon>
        <taxon>Spermatophyta</taxon>
        <taxon>Magnoliopsida</taxon>
        <taxon>eudicotyledons</taxon>
        <taxon>Gunneridae</taxon>
        <taxon>Pentapetalae</taxon>
        <taxon>rosids</taxon>
        <taxon>fabids</taxon>
        <taxon>Cucurbitales</taxon>
        <taxon>Cucurbitaceae</taxon>
        <taxon>Benincaseae</taxon>
        <taxon>Cucumis</taxon>
    </lineage>
</organism>
<accession>O82436</accession>
<protein>
    <recommendedName>
        <fullName>Ethylene receptor 1</fullName>
        <ecNumber>2.7.13.3</ecNumber>
    </recommendedName>
    <alternativeName>
        <fullName>Cm-ETR1</fullName>
    </alternativeName>
    <alternativeName>
        <fullName>MEETR1</fullName>
    </alternativeName>
</protein>
<feature type="chain" id="PRO_0000081414" description="Ethylene receptor 1">
    <location>
        <begin position="1"/>
        <end position="740"/>
    </location>
</feature>
<feature type="transmembrane region" description="Helical" evidence="2">
    <location>
        <begin position="23"/>
        <end position="43"/>
    </location>
</feature>
<feature type="transmembrane region" description="Helical" evidence="2">
    <location>
        <begin position="54"/>
        <end position="74"/>
    </location>
</feature>
<feature type="transmembrane region" description="Helical" evidence="2">
    <location>
        <begin position="92"/>
        <end position="112"/>
    </location>
</feature>
<feature type="domain" description="GAF">
    <location>
        <begin position="158"/>
        <end position="307"/>
    </location>
</feature>
<feature type="domain" description="Histidine kinase" evidence="3">
    <location>
        <begin position="350"/>
        <end position="588"/>
    </location>
</feature>
<feature type="domain" description="Response regulatory" evidence="4">
    <location>
        <begin position="614"/>
        <end position="731"/>
    </location>
</feature>
<feature type="binding site" evidence="1">
    <location>
        <position position="65"/>
    </location>
    <ligand>
        <name>Cu cation</name>
        <dbReference type="ChEBI" id="CHEBI:23378"/>
    </ligand>
</feature>
<feature type="binding site" evidence="1">
    <location>
        <position position="69"/>
    </location>
    <ligand>
        <name>Cu cation</name>
        <dbReference type="ChEBI" id="CHEBI:23378"/>
    </ligand>
</feature>
<feature type="modified residue" description="Phosphohistidine; by autocatalysis" evidence="3">
    <location>
        <position position="353"/>
    </location>
</feature>
<feature type="modified residue" description="4-aspartylphosphate" evidence="4">
    <location>
        <position position="662"/>
    </location>
</feature>
<feature type="disulfide bond" description="Interchain" evidence="1">
    <location>
        <position position="4"/>
    </location>
</feature>
<feature type="disulfide bond" description="Interchain" evidence="1">
    <location>
        <position position="6"/>
    </location>
</feature>
<dbReference type="EC" id="2.7.13.3"/>
<dbReference type="EMBL" id="AF054806">
    <property type="protein sequence ID" value="AAC99645.1"/>
    <property type="molecule type" value="mRNA"/>
</dbReference>
<dbReference type="EMBL" id="AB052228">
    <property type="protein sequence ID" value="BAB18937.1"/>
    <property type="molecule type" value="mRNA"/>
</dbReference>
<dbReference type="PIR" id="T51619">
    <property type="entry name" value="T51619"/>
</dbReference>
<dbReference type="SMR" id="O82436"/>
<dbReference type="BRENDA" id="2.7.13.3">
    <property type="organism ID" value="1735"/>
</dbReference>
<dbReference type="GO" id="GO:0005789">
    <property type="term" value="C:endoplasmic reticulum membrane"/>
    <property type="evidence" value="ECO:0007669"/>
    <property type="project" value="UniProtKB-SubCell"/>
</dbReference>
<dbReference type="GO" id="GO:0005524">
    <property type="term" value="F:ATP binding"/>
    <property type="evidence" value="ECO:0007669"/>
    <property type="project" value="UniProtKB-KW"/>
</dbReference>
<dbReference type="GO" id="GO:0051740">
    <property type="term" value="F:ethylene binding"/>
    <property type="evidence" value="ECO:0007669"/>
    <property type="project" value="InterPro"/>
</dbReference>
<dbReference type="GO" id="GO:0038199">
    <property type="term" value="F:ethylene receptor activity"/>
    <property type="evidence" value="ECO:0007669"/>
    <property type="project" value="InterPro"/>
</dbReference>
<dbReference type="GO" id="GO:0046872">
    <property type="term" value="F:metal ion binding"/>
    <property type="evidence" value="ECO:0007669"/>
    <property type="project" value="UniProtKB-KW"/>
</dbReference>
<dbReference type="GO" id="GO:0000155">
    <property type="term" value="F:phosphorelay sensor kinase activity"/>
    <property type="evidence" value="ECO:0007669"/>
    <property type="project" value="InterPro"/>
</dbReference>
<dbReference type="GO" id="GO:0010105">
    <property type="term" value="P:negative regulation of ethylene-activated signaling pathway"/>
    <property type="evidence" value="ECO:0007669"/>
    <property type="project" value="UniProtKB-ARBA"/>
</dbReference>
<dbReference type="CDD" id="cd00082">
    <property type="entry name" value="HisKA"/>
    <property type="match status" value="1"/>
</dbReference>
<dbReference type="CDD" id="cd19933">
    <property type="entry name" value="REC_ETR-like"/>
    <property type="match status" value="1"/>
</dbReference>
<dbReference type="FunFam" id="3.40.50.2300:FF:000192">
    <property type="entry name" value="Ethylene receptor"/>
    <property type="match status" value="1"/>
</dbReference>
<dbReference type="FunFam" id="1.10.287.130:FF:000004">
    <property type="entry name" value="Ethylene receptor 1"/>
    <property type="match status" value="1"/>
</dbReference>
<dbReference type="FunFam" id="3.30.565.10:FF:000030">
    <property type="entry name" value="Ethylene receptor 1"/>
    <property type="match status" value="1"/>
</dbReference>
<dbReference type="FunFam" id="3.30.450.40:FF:000026">
    <property type="entry name" value="Ethylene response sensor"/>
    <property type="match status" value="1"/>
</dbReference>
<dbReference type="Gene3D" id="1.10.287.130">
    <property type="match status" value="1"/>
</dbReference>
<dbReference type="Gene3D" id="3.30.450.40">
    <property type="match status" value="1"/>
</dbReference>
<dbReference type="Gene3D" id="3.40.50.2300">
    <property type="match status" value="1"/>
</dbReference>
<dbReference type="Gene3D" id="3.30.565.10">
    <property type="entry name" value="Histidine kinase-like ATPase, C-terminal domain"/>
    <property type="match status" value="1"/>
</dbReference>
<dbReference type="InterPro" id="IPR011006">
    <property type="entry name" value="CheY-like_superfamily"/>
</dbReference>
<dbReference type="InterPro" id="IPR014525">
    <property type="entry name" value="ETR"/>
</dbReference>
<dbReference type="InterPro" id="IPR003018">
    <property type="entry name" value="GAF"/>
</dbReference>
<dbReference type="InterPro" id="IPR029016">
    <property type="entry name" value="GAF-like_dom_sf"/>
</dbReference>
<dbReference type="InterPro" id="IPR036890">
    <property type="entry name" value="HATPase_C_sf"/>
</dbReference>
<dbReference type="InterPro" id="IPR005467">
    <property type="entry name" value="His_kinase_dom"/>
</dbReference>
<dbReference type="InterPro" id="IPR003661">
    <property type="entry name" value="HisK_dim/P_dom"/>
</dbReference>
<dbReference type="InterPro" id="IPR036097">
    <property type="entry name" value="HisK_dim/P_sf"/>
</dbReference>
<dbReference type="InterPro" id="IPR004358">
    <property type="entry name" value="Sig_transdc_His_kin-like_C"/>
</dbReference>
<dbReference type="InterPro" id="IPR001789">
    <property type="entry name" value="Sig_transdc_resp-reg_receiver"/>
</dbReference>
<dbReference type="PANTHER" id="PTHR24423:SF615">
    <property type="entry name" value="ETHYLENE RECEPTOR 1"/>
    <property type="match status" value="1"/>
</dbReference>
<dbReference type="PANTHER" id="PTHR24423">
    <property type="entry name" value="TWO-COMPONENT SENSOR HISTIDINE KINASE"/>
    <property type="match status" value="1"/>
</dbReference>
<dbReference type="Pfam" id="PF25487">
    <property type="entry name" value="ETR1_N"/>
    <property type="match status" value="1"/>
</dbReference>
<dbReference type="Pfam" id="PF01590">
    <property type="entry name" value="GAF"/>
    <property type="match status" value="1"/>
</dbReference>
<dbReference type="Pfam" id="PF02518">
    <property type="entry name" value="HATPase_c"/>
    <property type="match status" value="1"/>
</dbReference>
<dbReference type="Pfam" id="PF00512">
    <property type="entry name" value="HisKA"/>
    <property type="match status" value="1"/>
</dbReference>
<dbReference type="Pfam" id="PF00072">
    <property type="entry name" value="Response_reg"/>
    <property type="match status" value="1"/>
</dbReference>
<dbReference type="PIRSF" id="PIRSF026389">
    <property type="entry name" value="Ethyln_sen_HK"/>
    <property type="match status" value="1"/>
</dbReference>
<dbReference type="PRINTS" id="PR00344">
    <property type="entry name" value="BCTRLSENSOR"/>
</dbReference>
<dbReference type="SMART" id="SM00065">
    <property type="entry name" value="GAF"/>
    <property type="match status" value="1"/>
</dbReference>
<dbReference type="SMART" id="SM00387">
    <property type="entry name" value="HATPase_c"/>
    <property type="match status" value="1"/>
</dbReference>
<dbReference type="SMART" id="SM00388">
    <property type="entry name" value="HisKA"/>
    <property type="match status" value="1"/>
</dbReference>
<dbReference type="SMART" id="SM00448">
    <property type="entry name" value="REC"/>
    <property type="match status" value="1"/>
</dbReference>
<dbReference type="SUPFAM" id="SSF55874">
    <property type="entry name" value="ATPase domain of HSP90 chaperone/DNA topoisomerase II/histidine kinase"/>
    <property type="match status" value="1"/>
</dbReference>
<dbReference type="SUPFAM" id="SSF52172">
    <property type="entry name" value="CheY-like"/>
    <property type="match status" value="1"/>
</dbReference>
<dbReference type="SUPFAM" id="SSF55781">
    <property type="entry name" value="GAF domain-like"/>
    <property type="match status" value="1"/>
</dbReference>
<dbReference type="SUPFAM" id="SSF47384">
    <property type="entry name" value="Homodimeric domain of signal transducing histidine kinase"/>
    <property type="match status" value="1"/>
</dbReference>
<dbReference type="PROSITE" id="PS50109">
    <property type="entry name" value="HIS_KIN"/>
    <property type="match status" value="1"/>
</dbReference>
<dbReference type="PROSITE" id="PS50110">
    <property type="entry name" value="RESPONSE_REGULATORY"/>
    <property type="match status" value="1"/>
</dbReference>
<keyword id="KW-0067">ATP-binding</keyword>
<keyword id="KW-0186">Copper</keyword>
<keyword id="KW-1015">Disulfide bond</keyword>
<keyword id="KW-0256">Endoplasmic reticulum</keyword>
<keyword id="KW-0936">Ethylene signaling pathway</keyword>
<keyword id="KW-0418">Kinase</keyword>
<keyword id="KW-0472">Membrane</keyword>
<keyword id="KW-0479">Metal-binding</keyword>
<keyword id="KW-0547">Nucleotide-binding</keyword>
<keyword id="KW-0597">Phosphoprotein</keyword>
<keyword id="KW-0675">Receptor</keyword>
<keyword id="KW-0808">Transferase</keyword>
<keyword id="KW-0812">Transmembrane</keyword>
<keyword id="KW-1133">Transmembrane helix</keyword>
<keyword id="KW-0902">Two-component regulatory system</keyword>
<sequence length="740" mass="82657">MENCYCIEPQWPADELLMKYQYISDFFIALAYFSIPLELIYFVKKSAVFPYRWVLVQFGAFIVLCGATHLINLWTFTMHSRTVAVVMTTAKVLTAVVSCATALMLVHIIPDLLSVKTRELFLKNKAAELDREMGLIRTQEETGRHVRMLTHEIRSTLDRHTILKTTLVELGRTLALEECALWMPTRTGLELQLSYTLHQQNPVGYTVPINLPVISQVFSSNRALKISPNSPVASLRPRAGRYVAGEVVAVRVPLLHLSNFQINDWPELSTKRYALMVLMLPSDSARQWRVHELELVEVVADQVAVALSHAAILEESMRARDLLMEQNVALDLARREAETAIRARNDFLAVMNHEMRTPMHAIIALSSLLQETELTPEQRLMVETILKSSNLLATLINDVLDLSRLEDGSLQLDIGTFNLHAVFKEVLNLIKPVTLVKKLSLTLHLGPDLPVFAVGDEKRLMQAILNVVGNAVKFSKEGSISISAIVAKSETFREIRVPDFHPVPSDSHFYLRVQVKDTGSGISPQDIPKLFTKFAQTTVGPRNSGGSGLGLAICKRFVNLMEGHIWLESEGLGKGCTATFIVKLGIADQSNESKLPYTSKIHENSIHTSFPGLKVLVMDDNGVSRSVTKGLLVHLGCEVTTAGSIEEFLRVVSQEHKVVFMDICTPGVDGYELAIRIREKFAKCHERPFMVVLTGNSDKVTKESCLRAGMDGLILKPVSIDKMRSVLSELIERRVLFETS</sequence>
<reference key="1">
    <citation type="journal article" date="1999" name="Plant Physiol.">
        <title>Stage- and tissue-specific expression of ethylene receptor homolog genes during fruit development in muskmelon.</title>
        <authorList>
            <person name="Sato-Nara K."/>
            <person name="Yuhashi K."/>
            <person name="Higashi K."/>
            <person name="Hosoya K."/>
            <person name="Kubota M."/>
            <person name="Ezura H."/>
        </authorList>
    </citation>
    <scope>NUCLEOTIDE SEQUENCE [MRNA]</scope>
    <source>
        <tissue>Fruit</tissue>
    </source>
</reference>
<reference key="2">
    <citation type="submission" date="2000-12" db="EMBL/GenBank/DDBJ databases">
        <title>Gene expression analyses of Cm-ERS1 and Cm-ETR1 genes in ripening melon fruit.</title>
        <authorList>
            <person name="Furukawa H."/>
        </authorList>
    </citation>
    <scope>NUCLEOTIDE SEQUENCE [MRNA]</scope>
    <source>
        <tissue>Fruit</tissue>
    </source>
</reference>
<gene>
    <name type="primary">ETR1</name>
</gene>
<proteinExistence type="evidence at transcript level"/>
<name>ETR1_CUCMN</name>